<reference key="1">
    <citation type="journal article" date="2007" name="PLoS Genet.">
        <title>Patterns and implications of gene gain and loss in the evolution of Prochlorococcus.</title>
        <authorList>
            <person name="Kettler G.C."/>
            <person name="Martiny A.C."/>
            <person name="Huang K."/>
            <person name="Zucker J."/>
            <person name="Coleman M.L."/>
            <person name="Rodrigue S."/>
            <person name="Chen F."/>
            <person name="Lapidus A."/>
            <person name="Ferriera S."/>
            <person name="Johnson J."/>
            <person name="Steglich C."/>
            <person name="Church G.M."/>
            <person name="Richardson P."/>
            <person name="Chisholm S.W."/>
        </authorList>
    </citation>
    <scope>NUCLEOTIDE SEQUENCE [LARGE SCALE GENOMIC DNA]</scope>
    <source>
        <strain>MIT 9303</strain>
    </source>
</reference>
<organism>
    <name type="scientific">Prochlorococcus marinus (strain MIT 9303)</name>
    <dbReference type="NCBI Taxonomy" id="59922"/>
    <lineage>
        <taxon>Bacteria</taxon>
        <taxon>Bacillati</taxon>
        <taxon>Cyanobacteriota</taxon>
        <taxon>Cyanophyceae</taxon>
        <taxon>Synechococcales</taxon>
        <taxon>Prochlorococcaceae</taxon>
        <taxon>Prochlorococcus</taxon>
    </lineage>
</organism>
<accession>A2CAP6</accession>
<gene>
    <name evidence="1" type="primary">ndhL</name>
    <name type="ordered locus">P9303_18141</name>
</gene>
<protein>
    <recommendedName>
        <fullName evidence="1">NAD(P)H-quinone oxidoreductase subunit L</fullName>
        <ecNumber evidence="1">7.1.1.-</ecNumber>
    </recommendedName>
    <alternativeName>
        <fullName evidence="1">NAD(P)H dehydrogenase I subunit L</fullName>
    </alternativeName>
    <alternativeName>
        <fullName>NDH-1 subunit L</fullName>
    </alternativeName>
    <alternativeName>
        <fullName>NDH-L</fullName>
    </alternativeName>
</protein>
<sequence length="83" mass="9443">MFLQAVTSPISINSLMVLAAYVLLGGLYLIVVPLLLYSWMNRRWHCMGKFERLSAYGMVFLFFPGLILFAPFLNLRLNGQGEV</sequence>
<dbReference type="EC" id="7.1.1.-" evidence="1"/>
<dbReference type="EMBL" id="CP000554">
    <property type="protein sequence ID" value="ABM78556.1"/>
    <property type="status" value="ALT_INIT"/>
    <property type="molecule type" value="Genomic_DNA"/>
</dbReference>
<dbReference type="RefSeq" id="WP_041374840.1">
    <property type="nucleotide sequence ID" value="NC_008820.1"/>
</dbReference>
<dbReference type="SMR" id="A2CAP6"/>
<dbReference type="STRING" id="59922.P9303_18141"/>
<dbReference type="KEGG" id="pmf:P9303_18141"/>
<dbReference type="HOGENOM" id="CLU_171077_1_0_3"/>
<dbReference type="BioCyc" id="PMAR59922:G1G80-1569-MONOMER"/>
<dbReference type="Proteomes" id="UP000002274">
    <property type="component" value="Chromosome"/>
</dbReference>
<dbReference type="GO" id="GO:0031676">
    <property type="term" value="C:plasma membrane-derived thylakoid membrane"/>
    <property type="evidence" value="ECO:0007669"/>
    <property type="project" value="UniProtKB-SubCell"/>
</dbReference>
<dbReference type="GO" id="GO:0016655">
    <property type="term" value="F:oxidoreductase activity, acting on NAD(P)H, quinone or similar compound as acceptor"/>
    <property type="evidence" value="ECO:0007669"/>
    <property type="project" value="UniProtKB-UniRule"/>
</dbReference>
<dbReference type="GO" id="GO:0048038">
    <property type="term" value="F:quinone binding"/>
    <property type="evidence" value="ECO:0007669"/>
    <property type="project" value="UniProtKB-KW"/>
</dbReference>
<dbReference type="HAMAP" id="MF_01355">
    <property type="entry name" value="NDH1_NDH1L"/>
    <property type="match status" value="1"/>
</dbReference>
<dbReference type="InterPro" id="IPR019654">
    <property type="entry name" value="NADH-quinone_OxRdatse_su_L"/>
</dbReference>
<dbReference type="PANTHER" id="PTHR36727">
    <property type="entry name" value="NAD(P)H-QUINONE OXIDOREDUCTASE SUBUNIT L, CHLOROPLASTIC"/>
    <property type="match status" value="1"/>
</dbReference>
<dbReference type="PANTHER" id="PTHR36727:SF2">
    <property type="entry name" value="NAD(P)H-QUINONE OXIDOREDUCTASE SUBUNIT L, CHLOROPLASTIC"/>
    <property type="match status" value="1"/>
</dbReference>
<dbReference type="Pfam" id="PF10716">
    <property type="entry name" value="NdhL"/>
    <property type="match status" value="1"/>
</dbReference>
<evidence type="ECO:0000255" key="1">
    <source>
        <dbReference type="HAMAP-Rule" id="MF_01355"/>
    </source>
</evidence>
<evidence type="ECO:0000305" key="2"/>
<proteinExistence type="inferred from homology"/>
<name>NDHL_PROM3</name>
<keyword id="KW-0472">Membrane</keyword>
<keyword id="KW-0520">NAD</keyword>
<keyword id="KW-0521">NADP</keyword>
<keyword id="KW-0618">Plastoquinone</keyword>
<keyword id="KW-0874">Quinone</keyword>
<keyword id="KW-0793">Thylakoid</keyword>
<keyword id="KW-1278">Translocase</keyword>
<keyword id="KW-0812">Transmembrane</keyword>
<keyword id="KW-1133">Transmembrane helix</keyword>
<keyword id="KW-0813">Transport</keyword>
<feature type="chain" id="PRO_0000353676" description="NAD(P)H-quinone oxidoreductase subunit L">
    <location>
        <begin position="1"/>
        <end position="83"/>
    </location>
</feature>
<feature type="transmembrane region" description="Helical" evidence="1">
    <location>
        <begin position="15"/>
        <end position="35"/>
    </location>
</feature>
<feature type="transmembrane region" description="Helical" evidence="1">
    <location>
        <begin position="53"/>
        <end position="73"/>
    </location>
</feature>
<comment type="function">
    <text evidence="1">NDH-1 shuttles electrons from an unknown electron donor, via FMN and iron-sulfur (Fe-S) centers, to quinones in the respiratory and/or the photosynthetic chain. The immediate electron acceptor for the enzyme in this species is believed to be plastoquinone. Couples the redox reaction to proton translocation, and thus conserves the redox energy in a proton gradient. Cyanobacterial NDH-1 also plays a role in inorganic carbon-concentration.</text>
</comment>
<comment type="catalytic activity">
    <reaction evidence="1">
        <text>a plastoquinone + NADH + (n+1) H(+)(in) = a plastoquinol + NAD(+) + n H(+)(out)</text>
        <dbReference type="Rhea" id="RHEA:42608"/>
        <dbReference type="Rhea" id="RHEA-COMP:9561"/>
        <dbReference type="Rhea" id="RHEA-COMP:9562"/>
        <dbReference type="ChEBI" id="CHEBI:15378"/>
        <dbReference type="ChEBI" id="CHEBI:17757"/>
        <dbReference type="ChEBI" id="CHEBI:57540"/>
        <dbReference type="ChEBI" id="CHEBI:57945"/>
        <dbReference type="ChEBI" id="CHEBI:62192"/>
    </reaction>
</comment>
<comment type="catalytic activity">
    <reaction evidence="1">
        <text>a plastoquinone + NADPH + (n+1) H(+)(in) = a plastoquinol + NADP(+) + n H(+)(out)</text>
        <dbReference type="Rhea" id="RHEA:42612"/>
        <dbReference type="Rhea" id="RHEA-COMP:9561"/>
        <dbReference type="Rhea" id="RHEA-COMP:9562"/>
        <dbReference type="ChEBI" id="CHEBI:15378"/>
        <dbReference type="ChEBI" id="CHEBI:17757"/>
        <dbReference type="ChEBI" id="CHEBI:57783"/>
        <dbReference type="ChEBI" id="CHEBI:58349"/>
        <dbReference type="ChEBI" id="CHEBI:62192"/>
    </reaction>
</comment>
<comment type="subunit">
    <text evidence="1">NDH-1 can be composed of about 15 different subunits; different subcomplexes with different compositions have been identified which probably have different functions.</text>
</comment>
<comment type="subcellular location">
    <subcellularLocation>
        <location evidence="1">Cellular thylakoid membrane</location>
        <topology evidence="1">Multi-pass membrane protein</topology>
    </subcellularLocation>
</comment>
<comment type="similarity">
    <text evidence="1">Belongs to the complex I NdhL subunit family.</text>
</comment>
<comment type="sequence caution" evidence="2">
    <conflict type="erroneous initiation">
        <sequence resource="EMBL-CDS" id="ABM78556"/>
    </conflict>
</comment>